<keyword id="KW-1003">Cell membrane</keyword>
<keyword id="KW-0145">Chemotaxis</keyword>
<keyword id="KW-0472">Membrane</keyword>
<keyword id="KW-0488">Methylation</keyword>
<keyword id="KW-1185">Reference proteome</keyword>
<keyword id="KW-0807">Transducer</keyword>
<keyword id="KW-0812">Transmembrane</keyword>
<keyword id="KW-1133">Transmembrane helix</keyword>
<organism>
    <name type="scientific">Thermotoga maritima (strain ATCC 43589 / DSM 3109 / JCM 10099 / NBRC 100826 / MSB8)</name>
    <dbReference type="NCBI Taxonomy" id="243274"/>
    <lineage>
        <taxon>Bacteria</taxon>
        <taxon>Thermotogati</taxon>
        <taxon>Thermotogota</taxon>
        <taxon>Thermotogae</taxon>
        <taxon>Thermotogales</taxon>
        <taxon>Thermotogaceae</taxon>
        <taxon>Thermotoga</taxon>
    </lineage>
</organism>
<evidence type="ECO:0000250" key="1"/>
<evidence type="ECO:0000255" key="2"/>
<evidence type="ECO:0000255" key="3">
    <source>
        <dbReference type="PROSITE-ProRule" id="PRU00102"/>
    </source>
</evidence>
<evidence type="ECO:0000255" key="4">
    <source>
        <dbReference type="PROSITE-ProRule" id="PRU00284"/>
    </source>
</evidence>
<evidence type="ECO:0000269" key="5">
    <source>
    </source>
</evidence>
<evidence type="ECO:0000305" key="6"/>
<comment type="function">
    <text evidence="1">Chemotactic-signal transducers respond to changes in the concentration of attractants and repellents in the environment, transduce a signal from the outside to the inside of the cell, and facilitate sensory adaptation through the variation of the level of methylation.</text>
</comment>
<comment type="subcellular location">
    <subcellularLocation>
        <location evidence="6">Cell membrane</location>
        <topology evidence="6">Multi-pass membrane protein</topology>
    </subcellularLocation>
</comment>
<comment type="similarity">
    <text evidence="6">Belongs to the methyl-accepting chemotaxis (MCP) protein family.</text>
</comment>
<gene>
    <name type="primary">mcp3</name>
    <name type="ordered locus">TM_1146</name>
</gene>
<reference key="1">
    <citation type="journal article" date="1999" name="Nature">
        <title>Evidence for lateral gene transfer between Archaea and Bacteria from genome sequence of Thermotoga maritima.</title>
        <authorList>
            <person name="Nelson K.E."/>
            <person name="Clayton R.A."/>
            <person name="Gill S.R."/>
            <person name="Gwinn M.L."/>
            <person name="Dodson R.J."/>
            <person name="Haft D.H."/>
            <person name="Hickey E.K."/>
            <person name="Peterson J.D."/>
            <person name="Nelson W.C."/>
            <person name="Ketchum K.A."/>
            <person name="McDonald L.A."/>
            <person name="Utterback T.R."/>
            <person name="Malek J.A."/>
            <person name="Linher K.D."/>
            <person name="Garrett M.M."/>
            <person name="Stewart A.M."/>
            <person name="Cotton M.D."/>
            <person name="Pratt M.S."/>
            <person name="Phillips C.A."/>
            <person name="Richardson D.L."/>
            <person name="Heidelberg J.F."/>
            <person name="Sutton G.G."/>
            <person name="Fleischmann R.D."/>
            <person name="Eisen J.A."/>
            <person name="White O."/>
            <person name="Salzberg S.L."/>
            <person name="Smith H.O."/>
            <person name="Venter J.C."/>
            <person name="Fraser C.M."/>
        </authorList>
    </citation>
    <scope>NUCLEOTIDE SEQUENCE [LARGE SCALE GENOMIC DNA]</scope>
    <source>
        <strain>ATCC 43589 / DSM 3109 / JCM 10099 / NBRC 100826 / MSB8</strain>
    </source>
</reference>
<reference key="2">
    <citation type="journal article" date="2006" name="J. Bacteriol.">
        <title>Identification of methylation sites in Thermotoga maritima chemotaxis receptors.</title>
        <authorList>
            <person name="Perez E."/>
            <person name="Zheng H."/>
            <person name="Stock A.M."/>
        </authorList>
    </citation>
    <scope>METHYLATION AT GLU-255; GLU-284; GLU-479 AND GLU-515</scope>
</reference>
<accession>Q9X0N0</accession>
<dbReference type="EMBL" id="AE000512">
    <property type="protein sequence ID" value="AAD36222.1"/>
    <property type="molecule type" value="Genomic_DNA"/>
</dbReference>
<dbReference type="PIR" id="F72288">
    <property type="entry name" value="F72288"/>
</dbReference>
<dbReference type="RefSeq" id="NP_228952.1">
    <property type="nucleotide sequence ID" value="NC_000853.1"/>
</dbReference>
<dbReference type="RefSeq" id="WP_004080235.1">
    <property type="nucleotide sequence ID" value="NC_000853.1"/>
</dbReference>
<dbReference type="SMR" id="Q9X0N0"/>
<dbReference type="FunCoup" id="Q9X0N0">
    <property type="interactions" value="44"/>
</dbReference>
<dbReference type="STRING" id="243274.TM_1146"/>
<dbReference type="PaxDb" id="243274-THEMA_08610"/>
<dbReference type="EnsemblBacteria" id="AAD36222">
    <property type="protein sequence ID" value="AAD36222"/>
    <property type="gene ID" value="TM_1146"/>
</dbReference>
<dbReference type="KEGG" id="tma:TM1146"/>
<dbReference type="KEGG" id="tmi:THEMA_08610"/>
<dbReference type="KEGG" id="tmm:Tmari_1153"/>
<dbReference type="KEGG" id="tmw:THMA_1170"/>
<dbReference type="eggNOG" id="COG0840">
    <property type="taxonomic scope" value="Bacteria"/>
</dbReference>
<dbReference type="InParanoid" id="Q9X0N0"/>
<dbReference type="OrthoDB" id="1660488at2"/>
<dbReference type="Proteomes" id="UP000008183">
    <property type="component" value="Chromosome"/>
</dbReference>
<dbReference type="GO" id="GO:0005886">
    <property type="term" value="C:plasma membrane"/>
    <property type="evidence" value="ECO:0000318"/>
    <property type="project" value="GO_Central"/>
</dbReference>
<dbReference type="GO" id="GO:0004888">
    <property type="term" value="F:transmembrane signaling receptor activity"/>
    <property type="evidence" value="ECO:0000318"/>
    <property type="project" value="GO_Central"/>
</dbReference>
<dbReference type="GO" id="GO:0006935">
    <property type="term" value="P:chemotaxis"/>
    <property type="evidence" value="ECO:0000318"/>
    <property type="project" value="GO_Central"/>
</dbReference>
<dbReference type="GO" id="GO:0007165">
    <property type="term" value="P:signal transduction"/>
    <property type="evidence" value="ECO:0007669"/>
    <property type="project" value="UniProtKB-KW"/>
</dbReference>
<dbReference type="CDD" id="cd06225">
    <property type="entry name" value="HAMP"/>
    <property type="match status" value="1"/>
</dbReference>
<dbReference type="CDD" id="cd11386">
    <property type="entry name" value="MCP_signal"/>
    <property type="match status" value="1"/>
</dbReference>
<dbReference type="Gene3D" id="6.10.340.10">
    <property type="match status" value="1"/>
</dbReference>
<dbReference type="Gene3D" id="1.10.287.950">
    <property type="entry name" value="Methyl-accepting chemotaxis protein"/>
    <property type="match status" value="1"/>
</dbReference>
<dbReference type="InterPro" id="IPR004090">
    <property type="entry name" value="Chemotax_Me-accpt_rcpt"/>
</dbReference>
<dbReference type="InterPro" id="IPR003660">
    <property type="entry name" value="HAMP_dom"/>
</dbReference>
<dbReference type="InterPro" id="IPR051310">
    <property type="entry name" value="MCP_chemotaxis"/>
</dbReference>
<dbReference type="InterPro" id="IPR004089">
    <property type="entry name" value="MCPsignal_dom"/>
</dbReference>
<dbReference type="PANTHER" id="PTHR43531:SF11">
    <property type="entry name" value="METHYL-ACCEPTING CHEMOTAXIS PROTEIN 3"/>
    <property type="match status" value="1"/>
</dbReference>
<dbReference type="PANTHER" id="PTHR43531">
    <property type="entry name" value="PROTEIN ICFG"/>
    <property type="match status" value="1"/>
</dbReference>
<dbReference type="Pfam" id="PF00672">
    <property type="entry name" value="HAMP"/>
    <property type="match status" value="1"/>
</dbReference>
<dbReference type="Pfam" id="PF00015">
    <property type="entry name" value="MCPsignal"/>
    <property type="match status" value="1"/>
</dbReference>
<dbReference type="PRINTS" id="PR00260">
    <property type="entry name" value="CHEMTRNSDUCR"/>
</dbReference>
<dbReference type="SMART" id="SM00304">
    <property type="entry name" value="HAMP"/>
    <property type="match status" value="1"/>
</dbReference>
<dbReference type="SMART" id="SM00283">
    <property type="entry name" value="MA"/>
    <property type="match status" value="1"/>
</dbReference>
<dbReference type="SUPFAM" id="SSF58104">
    <property type="entry name" value="Methyl-accepting chemotaxis protein (MCP) signaling domain"/>
    <property type="match status" value="1"/>
</dbReference>
<dbReference type="PROSITE" id="PS50111">
    <property type="entry name" value="CHEMOTAXIS_TRANSDUC_2"/>
    <property type="match status" value="1"/>
</dbReference>
<dbReference type="PROSITE" id="PS50885">
    <property type="entry name" value="HAMP"/>
    <property type="match status" value="1"/>
</dbReference>
<feature type="chain" id="PRO_0000250995" description="Methyl-accepting chemotaxis protein 3">
    <location>
        <begin position="1"/>
        <end position="539"/>
    </location>
</feature>
<feature type="transmembrane region" description="Helical" evidence="2">
    <location>
        <begin position="8"/>
        <end position="28"/>
    </location>
</feature>
<feature type="transmembrane region" description="Helical" evidence="2">
    <location>
        <begin position="160"/>
        <end position="180"/>
    </location>
</feature>
<feature type="domain" description="HAMP" evidence="3">
    <location>
        <begin position="181"/>
        <end position="234"/>
    </location>
</feature>
<feature type="domain" description="Methyl-accepting transducer" evidence="4">
    <location>
        <begin position="253"/>
        <end position="489"/>
    </location>
</feature>
<feature type="modified residue" description="Glutamate methyl ester (Glu)" evidence="5">
    <location>
        <position position="255"/>
    </location>
</feature>
<feature type="modified residue" description="Glutamate methyl ester (Glu)" evidence="5">
    <location>
        <position position="284"/>
    </location>
</feature>
<feature type="modified residue" description="Glutamate methyl ester (Glu)" evidence="5">
    <location>
        <position position="479"/>
    </location>
</feature>
<feature type="modified residue" description="Glutamate methyl ester (Glu)" evidence="5">
    <location>
        <position position="515"/>
    </location>
</feature>
<name>MCP3_THEMA</name>
<protein>
    <recommendedName>
        <fullName>Methyl-accepting chemotaxis protein 3</fullName>
    </recommendedName>
</protein>
<proteinExistence type="evidence at protein level"/>
<sequence length="539" mass="58621">MKSVASKLLLGFGLVCAGLVLFGLLTFYNILSLEKIVADTANINRAIVELAINQAGVLVAVQNKDKSLLSSSVEGLRTSLDDIKAYQSDFSGENLKLLQESIAHLEEMIRITDSLIVDGVDQSIYDRFVELQAEIRNPLRKLVQNLGVENVSMTKNIKRNIIFFLVVVCAAAMFIAIFTTRNLTTPLKKLAVLVENLSHGVLNVEIEKIRSKDEIGKAAMAVEKLREILLDIITGINKASSEVSSSSEELSATSEELSANVNSISEALVSLNKEADENSATLEEFTASIEELSSTADSNSKSAQAMLESTQRVHEQVEKSTERIREITEKAHSTREMSENTKQALNRLLSMAENINSIVDTINSIAEQTNLLALNAAIEAARAGEAGRGFAVVADEIRKLAEESKAATQQIGEILGKLRDEINNSSKIVESTASAIEETASLVESIKDVFESIRIAMEDVQSRVESVAASTQEQSASLEELSAGVTRLTELLNKTRENTSSANSALQEANAALEELSASAQSLAELAQELQRRIEFFKI</sequence>